<dbReference type="EC" id="7.1.1.-" evidence="1"/>
<dbReference type="EMBL" id="EF115543">
    <property type="protein sequence ID" value="ABK79633.1"/>
    <property type="molecule type" value="Genomic_DNA"/>
</dbReference>
<dbReference type="RefSeq" id="YP_874789.1">
    <property type="nucleotide sequence ID" value="NC_008591.1"/>
</dbReference>
<dbReference type="SMR" id="A1EA61"/>
<dbReference type="GeneID" id="4525038"/>
<dbReference type="GO" id="GO:0009535">
    <property type="term" value="C:chloroplast thylakoid membrane"/>
    <property type="evidence" value="ECO:0007669"/>
    <property type="project" value="UniProtKB-SubCell"/>
</dbReference>
<dbReference type="GO" id="GO:0030964">
    <property type="term" value="C:NADH dehydrogenase complex"/>
    <property type="evidence" value="ECO:0007669"/>
    <property type="project" value="TreeGrafter"/>
</dbReference>
<dbReference type="GO" id="GO:0016655">
    <property type="term" value="F:oxidoreductase activity, acting on NAD(P)H, quinone or similar compound as acceptor"/>
    <property type="evidence" value="ECO:0007669"/>
    <property type="project" value="UniProtKB-UniRule"/>
</dbReference>
<dbReference type="GO" id="GO:0048038">
    <property type="term" value="F:quinone binding"/>
    <property type="evidence" value="ECO:0007669"/>
    <property type="project" value="UniProtKB-KW"/>
</dbReference>
<dbReference type="GO" id="GO:0042773">
    <property type="term" value="P:ATP synthesis coupled electron transport"/>
    <property type="evidence" value="ECO:0007669"/>
    <property type="project" value="InterPro"/>
</dbReference>
<dbReference type="GO" id="GO:0019684">
    <property type="term" value="P:photosynthesis, light reaction"/>
    <property type="evidence" value="ECO:0007669"/>
    <property type="project" value="UniProtKB-UniRule"/>
</dbReference>
<dbReference type="FunFam" id="1.10.287.3510:FF:000001">
    <property type="entry name" value="NADH-quinone oxidoreductase subunit K"/>
    <property type="match status" value="1"/>
</dbReference>
<dbReference type="Gene3D" id="1.10.287.3510">
    <property type="match status" value="1"/>
</dbReference>
<dbReference type="HAMAP" id="MF_01456">
    <property type="entry name" value="NDH1_NuoK"/>
    <property type="match status" value="1"/>
</dbReference>
<dbReference type="InterPro" id="IPR001133">
    <property type="entry name" value="NADH_UbQ_OxRdtase_chain4L/K"/>
</dbReference>
<dbReference type="InterPro" id="IPR039428">
    <property type="entry name" value="NUOK/Mnh_C1-like"/>
</dbReference>
<dbReference type="NCBIfam" id="NF004320">
    <property type="entry name" value="PRK05715.1-2"/>
    <property type="match status" value="1"/>
</dbReference>
<dbReference type="PANTHER" id="PTHR11434:SF16">
    <property type="entry name" value="NADH-UBIQUINONE OXIDOREDUCTASE CHAIN 4L"/>
    <property type="match status" value="1"/>
</dbReference>
<dbReference type="PANTHER" id="PTHR11434">
    <property type="entry name" value="NADH-UBIQUINONE OXIDOREDUCTASE SUBUNIT ND4L"/>
    <property type="match status" value="1"/>
</dbReference>
<dbReference type="Pfam" id="PF00420">
    <property type="entry name" value="Oxidored_q2"/>
    <property type="match status" value="1"/>
</dbReference>
<geneLocation type="chloroplast"/>
<proteinExistence type="inferred from homology"/>
<protein>
    <recommendedName>
        <fullName evidence="1">NAD(P)H-quinone oxidoreductase subunit 4L, chloroplastic</fullName>
        <ecNumber evidence="1">7.1.1.-</ecNumber>
    </recommendedName>
    <alternativeName>
        <fullName evidence="1">NAD(P)H dehydrogenase subunit 4L</fullName>
    </alternativeName>
    <alternativeName>
        <fullName evidence="1">NADH-plastoquinone oxidoreductase subunit 4L</fullName>
    </alternativeName>
</protein>
<reference key="1">
    <citation type="journal article" date="2007" name="Theor. Appl. Genet.">
        <title>Complete chloroplast genome sequences of Hordeum vulgare, Sorghum bicolor and Agrostis stolonifera, and comparative analyses with other grass genomes.</title>
        <authorList>
            <person name="Saski C."/>
            <person name="Lee S.-B."/>
            <person name="Fjellheim S."/>
            <person name="Guda C."/>
            <person name="Jansen R.K."/>
            <person name="Luo H."/>
            <person name="Tomkins J."/>
            <person name="Rognli O.A."/>
            <person name="Daniell H."/>
            <person name="Clarke J.L."/>
        </authorList>
    </citation>
    <scope>NUCLEOTIDE SEQUENCE [LARGE SCALE GENOMIC DNA]</scope>
    <source>
        <strain>cv. Penn A-4</strain>
    </source>
</reference>
<organism>
    <name type="scientific">Agrostis stolonifera</name>
    <name type="common">Creeping bentgrass</name>
    <dbReference type="NCBI Taxonomy" id="63632"/>
    <lineage>
        <taxon>Eukaryota</taxon>
        <taxon>Viridiplantae</taxon>
        <taxon>Streptophyta</taxon>
        <taxon>Embryophyta</taxon>
        <taxon>Tracheophyta</taxon>
        <taxon>Spermatophyta</taxon>
        <taxon>Magnoliopsida</taxon>
        <taxon>Liliopsida</taxon>
        <taxon>Poales</taxon>
        <taxon>Poaceae</taxon>
        <taxon>BOP clade</taxon>
        <taxon>Pooideae</taxon>
        <taxon>Poodae</taxon>
        <taxon>Poeae</taxon>
        <taxon>Poeae Chloroplast Group 1 (Aveneae type)</taxon>
        <taxon>Agrostidodinae</taxon>
        <taxon>Agrostidinae</taxon>
        <taxon>Agrostis</taxon>
    </lineage>
</organism>
<gene>
    <name evidence="1" type="primary">ndhE</name>
</gene>
<evidence type="ECO:0000255" key="1">
    <source>
        <dbReference type="HAMAP-Rule" id="MF_01456"/>
    </source>
</evidence>
<name>NU4LC_AGRST</name>
<comment type="function">
    <text evidence="1">NDH shuttles electrons from NAD(P)H:plastoquinone, via FMN and iron-sulfur (Fe-S) centers, to quinones in the photosynthetic chain and possibly in a chloroplast respiratory chain. The immediate electron acceptor for the enzyme in this species is believed to be plastoquinone. Couples the redox reaction to proton translocation, and thus conserves the redox energy in a proton gradient.</text>
</comment>
<comment type="catalytic activity">
    <reaction evidence="1">
        <text>a plastoquinone + NADH + (n+1) H(+)(in) = a plastoquinol + NAD(+) + n H(+)(out)</text>
        <dbReference type="Rhea" id="RHEA:42608"/>
        <dbReference type="Rhea" id="RHEA-COMP:9561"/>
        <dbReference type="Rhea" id="RHEA-COMP:9562"/>
        <dbReference type="ChEBI" id="CHEBI:15378"/>
        <dbReference type="ChEBI" id="CHEBI:17757"/>
        <dbReference type="ChEBI" id="CHEBI:57540"/>
        <dbReference type="ChEBI" id="CHEBI:57945"/>
        <dbReference type="ChEBI" id="CHEBI:62192"/>
    </reaction>
</comment>
<comment type="catalytic activity">
    <reaction evidence="1">
        <text>a plastoquinone + NADPH + (n+1) H(+)(in) = a plastoquinol + NADP(+) + n H(+)(out)</text>
        <dbReference type="Rhea" id="RHEA:42612"/>
        <dbReference type="Rhea" id="RHEA-COMP:9561"/>
        <dbReference type="Rhea" id="RHEA-COMP:9562"/>
        <dbReference type="ChEBI" id="CHEBI:15378"/>
        <dbReference type="ChEBI" id="CHEBI:17757"/>
        <dbReference type="ChEBI" id="CHEBI:57783"/>
        <dbReference type="ChEBI" id="CHEBI:58349"/>
        <dbReference type="ChEBI" id="CHEBI:62192"/>
    </reaction>
</comment>
<comment type="subunit">
    <text evidence="1">NDH is composed of at least 16 different subunits, 5 of which are encoded in the nucleus.</text>
</comment>
<comment type="subcellular location">
    <subcellularLocation>
        <location evidence="1">Plastid</location>
        <location evidence="1">Chloroplast thylakoid membrane</location>
        <topology evidence="1">Multi-pass membrane protein</topology>
    </subcellularLocation>
</comment>
<comment type="similarity">
    <text evidence="1">Belongs to the complex I subunit 4L family.</text>
</comment>
<sequence>MMFEHVLFLSVYLFSIGIYGLITSRNMVRALICLELILNSINLNLVTFSDLFDSRQLKGDIFAIFVIALAAAEAAIGLSILSSIHRNRKSTRINQSNLLNN</sequence>
<accession>A1EA61</accession>
<feature type="chain" id="PRO_0000360302" description="NAD(P)H-quinone oxidoreductase subunit 4L, chloroplastic">
    <location>
        <begin position="1"/>
        <end position="101"/>
    </location>
</feature>
<feature type="transmembrane region" description="Helical" evidence="1">
    <location>
        <begin position="2"/>
        <end position="22"/>
    </location>
</feature>
<feature type="transmembrane region" description="Helical" evidence="1">
    <location>
        <begin position="32"/>
        <end position="52"/>
    </location>
</feature>
<feature type="transmembrane region" description="Helical" evidence="1">
    <location>
        <begin position="61"/>
        <end position="81"/>
    </location>
</feature>
<keyword id="KW-0150">Chloroplast</keyword>
<keyword id="KW-0472">Membrane</keyword>
<keyword id="KW-0520">NAD</keyword>
<keyword id="KW-0521">NADP</keyword>
<keyword id="KW-0934">Plastid</keyword>
<keyword id="KW-0618">Plastoquinone</keyword>
<keyword id="KW-0874">Quinone</keyword>
<keyword id="KW-0793">Thylakoid</keyword>
<keyword id="KW-1278">Translocase</keyword>
<keyword id="KW-0812">Transmembrane</keyword>
<keyword id="KW-1133">Transmembrane helix</keyword>
<keyword id="KW-0813">Transport</keyword>